<protein>
    <recommendedName>
        <fullName evidence="2">GTP cyclohydrolase 1</fullName>
        <ecNumber evidence="2">3.5.4.16</ecNumber>
    </recommendedName>
    <alternativeName>
        <fullName evidence="2">GTP cyclohydrolase I</fullName>
        <shortName evidence="2">GTP-CH-I</shortName>
    </alternativeName>
</protein>
<feature type="chain" id="PRO_1000043752" description="GTP cyclohydrolase 1">
    <location>
        <begin position="1"/>
        <end position="229"/>
    </location>
</feature>
<feature type="binding site" evidence="2">
    <location>
        <position position="116"/>
    </location>
    <ligand>
        <name>Zn(2+)</name>
        <dbReference type="ChEBI" id="CHEBI:29105"/>
    </ligand>
</feature>
<feature type="binding site" evidence="2">
    <location>
        <position position="119"/>
    </location>
    <ligand>
        <name>Zn(2+)</name>
        <dbReference type="ChEBI" id="CHEBI:29105"/>
    </ligand>
</feature>
<feature type="binding site" evidence="2">
    <location>
        <position position="187"/>
    </location>
    <ligand>
        <name>Zn(2+)</name>
        <dbReference type="ChEBI" id="CHEBI:29105"/>
    </ligand>
</feature>
<dbReference type="EC" id="3.5.4.16" evidence="2"/>
<dbReference type="EMBL" id="CP000239">
    <property type="protein sequence ID" value="ABD00894.1"/>
    <property type="molecule type" value="Genomic_DNA"/>
</dbReference>
<dbReference type="SMR" id="Q2JR69"/>
<dbReference type="STRING" id="321327.CYA_2792"/>
<dbReference type="KEGG" id="cya:CYA_2792"/>
<dbReference type="eggNOG" id="COG0302">
    <property type="taxonomic scope" value="Bacteria"/>
</dbReference>
<dbReference type="HOGENOM" id="CLU_049768_2_2_3"/>
<dbReference type="OrthoDB" id="9801207at2"/>
<dbReference type="UniPathway" id="UPA00848">
    <property type="reaction ID" value="UER00151"/>
</dbReference>
<dbReference type="Proteomes" id="UP000008818">
    <property type="component" value="Chromosome"/>
</dbReference>
<dbReference type="GO" id="GO:0005737">
    <property type="term" value="C:cytoplasm"/>
    <property type="evidence" value="ECO:0007669"/>
    <property type="project" value="TreeGrafter"/>
</dbReference>
<dbReference type="GO" id="GO:0005525">
    <property type="term" value="F:GTP binding"/>
    <property type="evidence" value="ECO:0007669"/>
    <property type="project" value="UniProtKB-KW"/>
</dbReference>
<dbReference type="GO" id="GO:0003934">
    <property type="term" value="F:GTP cyclohydrolase I activity"/>
    <property type="evidence" value="ECO:0007669"/>
    <property type="project" value="UniProtKB-UniRule"/>
</dbReference>
<dbReference type="GO" id="GO:0008270">
    <property type="term" value="F:zinc ion binding"/>
    <property type="evidence" value="ECO:0007669"/>
    <property type="project" value="UniProtKB-UniRule"/>
</dbReference>
<dbReference type="GO" id="GO:0006730">
    <property type="term" value="P:one-carbon metabolic process"/>
    <property type="evidence" value="ECO:0007669"/>
    <property type="project" value="UniProtKB-UniRule"/>
</dbReference>
<dbReference type="GO" id="GO:0006729">
    <property type="term" value="P:tetrahydrobiopterin biosynthetic process"/>
    <property type="evidence" value="ECO:0007669"/>
    <property type="project" value="TreeGrafter"/>
</dbReference>
<dbReference type="GO" id="GO:0046654">
    <property type="term" value="P:tetrahydrofolate biosynthetic process"/>
    <property type="evidence" value="ECO:0007669"/>
    <property type="project" value="UniProtKB-UniRule"/>
</dbReference>
<dbReference type="CDD" id="cd00642">
    <property type="entry name" value="GTP_cyclohydro1"/>
    <property type="match status" value="1"/>
</dbReference>
<dbReference type="FunFam" id="3.30.1130.10:FF:000012">
    <property type="entry name" value="GTP cyclohydrolase 1"/>
    <property type="match status" value="1"/>
</dbReference>
<dbReference type="Gene3D" id="1.10.286.10">
    <property type="match status" value="1"/>
</dbReference>
<dbReference type="Gene3D" id="3.30.1130.10">
    <property type="match status" value="1"/>
</dbReference>
<dbReference type="HAMAP" id="MF_00223">
    <property type="entry name" value="FolE"/>
    <property type="match status" value="1"/>
</dbReference>
<dbReference type="InterPro" id="IPR043133">
    <property type="entry name" value="GTP-CH-I_C/QueF"/>
</dbReference>
<dbReference type="InterPro" id="IPR043134">
    <property type="entry name" value="GTP-CH-I_N"/>
</dbReference>
<dbReference type="InterPro" id="IPR001474">
    <property type="entry name" value="GTP_CycHdrlase_I"/>
</dbReference>
<dbReference type="InterPro" id="IPR018234">
    <property type="entry name" value="GTP_CycHdrlase_I_CS"/>
</dbReference>
<dbReference type="InterPro" id="IPR020602">
    <property type="entry name" value="GTP_CycHdrlase_I_dom"/>
</dbReference>
<dbReference type="NCBIfam" id="TIGR00063">
    <property type="entry name" value="folE"/>
    <property type="match status" value="1"/>
</dbReference>
<dbReference type="NCBIfam" id="NF006825">
    <property type="entry name" value="PRK09347.1-2"/>
    <property type="match status" value="1"/>
</dbReference>
<dbReference type="NCBIfam" id="NF006826">
    <property type="entry name" value="PRK09347.1-3"/>
    <property type="match status" value="1"/>
</dbReference>
<dbReference type="PANTHER" id="PTHR11109:SF7">
    <property type="entry name" value="GTP CYCLOHYDROLASE 1"/>
    <property type="match status" value="1"/>
</dbReference>
<dbReference type="PANTHER" id="PTHR11109">
    <property type="entry name" value="GTP CYCLOHYDROLASE I"/>
    <property type="match status" value="1"/>
</dbReference>
<dbReference type="Pfam" id="PF01227">
    <property type="entry name" value="GTP_cyclohydroI"/>
    <property type="match status" value="1"/>
</dbReference>
<dbReference type="SUPFAM" id="SSF55620">
    <property type="entry name" value="Tetrahydrobiopterin biosynthesis enzymes-like"/>
    <property type="match status" value="1"/>
</dbReference>
<dbReference type="PROSITE" id="PS00859">
    <property type="entry name" value="GTP_CYCLOHYDROL_1_1"/>
    <property type="match status" value="1"/>
</dbReference>
<dbReference type="PROSITE" id="PS00860">
    <property type="entry name" value="GTP_CYCLOHYDROL_1_2"/>
    <property type="match status" value="1"/>
</dbReference>
<reference key="1">
    <citation type="journal article" date="2007" name="ISME J.">
        <title>Population level functional diversity in a microbial community revealed by comparative genomic and metagenomic analyses.</title>
        <authorList>
            <person name="Bhaya D."/>
            <person name="Grossman A.R."/>
            <person name="Steunou A.-S."/>
            <person name="Khuri N."/>
            <person name="Cohan F.M."/>
            <person name="Hamamura N."/>
            <person name="Melendrez M.C."/>
            <person name="Bateson M.M."/>
            <person name="Ward D.M."/>
            <person name="Heidelberg J.F."/>
        </authorList>
    </citation>
    <scope>NUCLEOTIDE SEQUENCE [LARGE SCALE GENOMIC DNA]</scope>
    <source>
        <strain>JA-3-3Ab</strain>
    </source>
</reference>
<evidence type="ECO:0000250" key="1"/>
<evidence type="ECO:0000255" key="2">
    <source>
        <dbReference type="HAMAP-Rule" id="MF_00223"/>
    </source>
</evidence>
<name>GCH1_SYNJA</name>
<comment type="catalytic activity">
    <reaction evidence="2">
        <text>GTP + H2O = 7,8-dihydroneopterin 3'-triphosphate + formate + H(+)</text>
        <dbReference type="Rhea" id="RHEA:17473"/>
        <dbReference type="ChEBI" id="CHEBI:15377"/>
        <dbReference type="ChEBI" id="CHEBI:15378"/>
        <dbReference type="ChEBI" id="CHEBI:15740"/>
        <dbReference type="ChEBI" id="CHEBI:37565"/>
        <dbReference type="ChEBI" id="CHEBI:58462"/>
        <dbReference type="EC" id="3.5.4.16"/>
    </reaction>
</comment>
<comment type="pathway">
    <text evidence="2">Cofactor biosynthesis; 7,8-dihydroneopterin triphosphate biosynthesis; 7,8-dihydroneopterin triphosphate from GTP: step 1/1.</text>
</comment>
<comment type="subunit">
    <text evidence="1">Toroid-shaped homodecamer, composed of two pentamers of five dimers.</text>
</comment>
<comment type="similarity">
    <text evidence="2">Belongs to the GTP cyclohydrolase I family.</text>
</comment>
<proteinExistence type="inferred from homology"/>
<gene>
    <name evidence="2" type="primary">folE</name>
    <name type="ordered locus">CYA_2792</name>
</gene>
<organism>
    <name type="scientific">Synechococcus sp. (strain JA-3-3Ab)</name>
    <name type="common">Cyanobacteria bacterium Yellowstone A-Prime</name>
    <dbReference type="NCBI Taxonomy" id="321327"/>
    <lineage>
        <taxon>Bacteria</taxon>
        <taxon>Bacillati</taxon>
        <taxon>Cyanobacteriota</taxon>
        <taxon>Cyanophyceae</taxon>
        <taxon>Synechococcales</taxon>
        <taxon>Synechococcaceae</taxon>
        <taxon>Synechococcus</taxon>
    </lineage>
</organism>
<accession>Q2JR69</accession>
<keyword id="KW-0342">GTP-binding</keyword>
<keyword id="KW-0378">Hydrolase</keyword>
<keyword id="KW-0479">Metal-binding</keyword>
<keyword id="KW-0547">Nucleotide-binding</keyword>
<keyword id="KW-0554">One-carbon metabolism</keyword>
<keyword id="KW-0862">Zinc</keyword>
<sequence length="229" mass="25520">MTLAKPGSGAEFRLNNKANLKSRLVRDLSHAAGQEPEGSESLDPAMVAAVETLLRGIGEDPQREGLKKTPERVVAALKFLTSGYRQSLEDLINGAIFDEGHDEMVLLRDITLFSLCEHHLLPFIGKAHVAYIPRQKVVGLSKIARIVEMYSRRLQVQERLTRQIAEALMTMLDPYGVGVVIEATHMCMVMRGVQKPGSWTVTSSMVGVFQEDPRTREEFLSLIRHPSNL</sequence>